<keyword id="KW-0010">Activator</keyword>
<keyword id="KW-0025">Alternative splicing</keyword>
<keyword id="KW-0131">Cell cycle</keyword>
<keyword id="KW-0132">Cell division</keyword>
<keyword id="KW-0156">Chromatin regulator</keyword>
<keyword id="KW-0378">Hydrolase</keyword>
<keyword id="KW-1017">Isopeptide bond</keyword>
<keyword id="KW-0479">Metal-binding</keyword>
<keyword id="KW-0498">Mitosis</keyword>
<keyword id="KW-0539">Nucleus</keyword>
<keyword id="KW-0597">Phosphoprotein</keyword>
<keyword id="KW-0645">Protease</keyword>
<keyword id="KW-1185">Reference proteome</keyword>
<keyword id="KW-0788">Thiol protease</keyword>
<keyword id="KW-0804">Transcription</keyword>
<keyword id="KW-0805">Transcription regulation</keyword>
<keyword id="KW-0832">Ubl conjugation</keyword>
<keyword id="KW-0833">Ubl conjugation pathway</keyword>
<keyword id="KW-0862">Zinc</keyword>
<keyword id="KW-0863">Zinc-finger</keyword>
<name>UBP16_RAT</name>
<sequence>MGKKRTKGKSVPEKASSESTEPMCRHLRKGLEQGNLKKALVNVEWNICQDCKTDNKVKDKSEEEAEDPSVWLCLKCGHQGCGRDSQEQHALKHYTTPRSEPHYLVLSLDNWSVWCYKCDEEIKYCSSNRLGQVVDYVRKQAGRITSKPAEKNNGHIELENKKLEKESKNEQEREKSESMAKENIPLDSASQITVKGLSNLGNTCFFNAVMQNLSQTPVLRELLKEVKMSGTIVKIEPPDLALTEPLEVNLEPPGPLTLAMSQFLNEMQENKKRIVTPKELFSQVCKKATRFKGYQQQDSQELLRYLLDGMRAEEHQRVSKGILKAFGNSTEKLDEEVKNKVKDYEKKKAIPSFVDRIFGGELTSTIMCDDCRTVSLVHESFLDLSLPVLDDQSGKKNINDKNVKKTMEEEDKDSEEEKDDSYMKTRSDVPSGTSKHTQKKAKKQAKKQAKNQRRQQKIQERFLHFNEICTTNYTEDNDHEAETALPGEGEVDTEFNRGSQEELTQTELCANQKDVNGQEEMIESAADERKCPEHPEVKSVSTESDLGSLTSAPECPRDLNGAFLEERTSGELDITNGLKNLTLNAAVDPDEISIEILNDSHSPALKVYEVMNEDPETAFCTLANREAFSTDECSIQHCLYQFTRNEKLQDANKLLCEVCTRRQCNGPKANIKGERKHVYTNAKKQMLVSLAPPVLTLHLKRFQQAGFNLRKVNKHIKFPEILDLAPFCTLKCKNVAEESTRVLYSLYGVVEHSGTMRSGHYTAYAKERTASCHLSNLVLHGDIPQDCEMESTKGQWFHISDTHVQAVPITKVLNSQAYLLFYERIL</sequence>
<gene>
    <name type="primary">Usp16</name>
</gene>
<proteinExistence type="evidence at protein level"/>
<evidence type="ECO:0000250" key="1">
    <source>
        <dbReference type="UniProtKB" id="Q9Y5T5"/>
    </source>
</evidence>
<evidence type="ECO:0000255" key="2">
    <source>
        <dbReference type="HAMAP-Rule" id="MF_03062"/>
    </source>
</evidence>
<evidence type="ECO:0000255" key="3">
    <source>
        <dbReference type="PROSITE-ProRule" id="PRU00502"/>
    </source>
</evidence>
<evidence type="ECO:0000256" key="4">
    <source>
        <dbReference type="SAM" id="MobiDB-lite"/>
    </source>
</evidence>
<evidence type="ECO:0000303" key="5">
    <source>
    </source>
</evidence>
<evidence type="ECO:0000305" key="6"/>
<evidence type="ECO:0007744" key="7">
    <source>
    </source>
</evidence>
<dbReference type="EC" id="3.4.19.12" evidence="2"/>
<dbReference type="EMBL" id="CH473989">
    <property type="protein sequence ID" value="EDM10641.1"/>
    <property type="molecule type" value="Genomic_DNA"/>
</dbReference>
<dbReference type="EMBL" id="BC112386">
    <property type="protein sequence ID" value="AAI12387.1"/>
    <property type="status" value="ALT_SEQ"/>
    <property type="molecule type" value="mRNA"/>
</dbReference>
<dbReference type="RefSeq" id="NP_001093971.1">
    <molecule id="Q2KJ09-2"/>
    <property type="nucleotide sequence ID" value="NM_001100501.1"/>
</dbReference>
<dbReference type="RefSeq" id="XP_006248077.1">
    <molecule id="Q2KJ09-1"/>
    <property type="nucleotide sequence ID" value="XM_006248015.4"/>
</dbReference>
<dbReference type="SMR" id="Q2KJ09"/>
<dbReference type="FunCoup" id="Q2KJ09">
    <property type="interactions" value="4095"/>
</dbReference>
<dbReference type="STRING" id="10116.ENSRNOP00000002173"/>
<dbReference type="iPTMnet" id="Q2KJ09"/>
<dbReference type="PhosphoSitePlus" id="Q2KJ09"/>
<dbReference type="PaxDb" id="10116-ENSRNOP00000002173"/>
<dbReference type="Ensembl" id="ENSRNOT00000002173.7">
    <molecule id="Q2KJ09-2"/>
    <property type="protein sequence ID" value="ENSRNOP00000002173.5"/>
    <property type="gene ID" value="ENSRNOG00000001598.7"/>
</dbReference>
<dbReference type="GeneID" id="288306"/>
<dbReference type="KEGG" id="rno:288306"/>
<dbReference type="UCSC" id="RGD:1307192">
    <molecule id="Q2KJ09-1"/>
    <property type="organism name" value="rat"/>
</dbReference>
<dbReference type="AGR" id="RGD:1307192"/>
<dbReference type="CTD" id="10600"/>
<dbReference type="RGD" id="1307192">
    <property type="gene designation" value="Usp16"/>
</dbReference>
<dbReference type="VEuPathDB" id="HostDB:ENSRNOG00000001598"/>
<dbReference type="eggNOG" id="KOG1873">
    <property type="taxonomic scope" value="Eukaryota"/>
</dbReference>
<dbReference type="GeneTree" id="ENSGT00940000156013"/>
<dbReference type="HOGENOM" id="CLU_007938_1_0_1"/>
<dbReference type="InParanoid" id="Q2KJ09"/>
<dbReference type="OMA" id="MAAGHYV"/>
<dbReference type="OrthoDB" id="2020758at2759"/>
<dbReference type="PhylomeDB" id="Q2KJ09"/>
<dbReference type="TreeFam" id="TF326075"/>
<dbReference type="Reactome" id="R-RNO-5689880">
    <property type="pathway name" value="Ub-specific processing proteases"/>
</dbReference>
<dbReference type="PRO" id="PR:Q2KJ09"/>
<dbReference type="Proteomes" id="UP000002494">
    <property type="component" value="Chromosome 11"/>
</dbReference>
<dbReference type="Proteomes" id="UP000234681">
    <property type="component" value="Chromosome 11"/>
</dbReference>
<dbReference type="Bgee" id="ENSRNOG00000001598">
    <property type="expression patterns" value="Expressed in testis and 19 other cell types or tissues"/>
</dbReference>
<dbReference type="GO" id="GO:0005737">
    <property type="term" value="C:cytoplasm"/>
    <property type="evidence" value="ECO:0000250"/>
    <property type="project" value="UniProtKB"/>
</dbReference>
<dbReference type="GO" id="GO:0005634">
    <property type="term" value="C:nucleus"/>
    <property type="evidence" value="ECO:0000250"/>
    <property type="project" value="UniProtKB"/>
</dbReference>
<dbReference type="GO" id="GO:0004843">
    <property type="term" value="F:cysteine-type deubiquitinase activity"/>
    <property type="evidence" value="ECO:0000250"/>
    <property type="project" value="UniProtKB"/>
</dbReference>
<dbReference type="GO" id="GO:0004197">
    <property type="term" value="F:cysteine-type endopeptidase activity"/>
    <property type="evidence" value="ECO:0000250"/>
    <property type="project" value="UniProtKB"/>
</dbReference>
<dbReference type="GO" id="GO:0042393">
    <property type="term" value="F:histone binding"/>
    <property type="evidence" value="ECO:0000250"/>
    <property type="project" value="UniProtKB"/>
</dbReference>
<dbReference type="GO" id="GO:0140950">
    <property type="term" value="F:histone H2A deubiquitinase activity"/>
    <property type="evidence" value="ECO:0000250"/>
    <property type="project" value="UniProtKB"/>
</dbReference>
<dbReference type="GO" id="GO:0043024">
    <property type="term" value="F:ribosomal small subunit binding"/>
    <property type="evidence" value="ECO:0000250"/>
    <property type="project" value="UniProtKB"/>
</dbReference>
<dbReference type="GO" id="GO:0003713">
    <property type="term" value="F:transcription coactivator activity"/>
    <property type="evidence" value="ECO:0000250"/>
    <property type="project" value="UniProtKB"/>
</dbReference>
<dbReference type="GO" id="GO:0043130">
    <property type="term" value="F:ubiquitin binding"/>
    <property type="evidence" value="ECO:0000250"/>
    <property type="project" value="UniProtKB"/>
</dbReference>
<dbReference type="GO" id="GO:0008270">
    <property type="term" value="F:zinc ion binding"/>
    <property type="evidence" value="ECO:0000250"/>
    <property type="project" value="UniProtKB"/>
</dbReference>
<dbReference type="GO" id="GO:0051301">
    <property type="term" value="P:cell division"/>
    <property type="evidence" value="ECO:0007669"/>
    <property type="project" value="UniProtKB-KW"/>
</dbReference>
<dbReference type="GO" id="GO:0006974">
    <property type="term" value="P:DNA damage response"/>
    <property type="evidence" value="ECO:0000250"/>
    <property type="project" value="UniProtKB"/>
</dbReference>
<dbReference type="GO" id="GO:0140014">
    <property type="term" value="P:mitotic nuclear division"/>
    <property type="evidence" value="ECO:0007669"/>
    <property type="project" value="UniProtKB-UniRule"/>
</dbReference>
<dbReference type="GO" id="GO:0035520">
    <property type="term" value="P:monoubiquitinated protein deubiquitination"/>
    <property type="evidence" value="ECO:0000250"/>
    <property type="project" value="UniProtKB"/>
</dbReference>
<dbReference type="GO" id="GO:0045893">
    <property type="term" value="P:positive regulation of DNA-templated transcription"/>
    <property type="evidence" value="ECO:0000250"/>
    <property type="project" value="UniProtKB"/>
</dbReference>
<dbReference type="GO" id="GO:0090070">
    <property type="term" value="P:positive regulation of ribosome biogenesis"/>
    <property type="evidence" value="ECO:0000250"/>
    <property type="project" value="UniProtKB"/>
</dbReference>
<dbReference type="GO" id="GO:0045944">
    <property type="term" value="P:positive regulation of transcription by RNA polymerase II"/>
    <property type="evidence" value="ECO:0000250"/>
    <property type="project" value="UniProtKB"/>
</dbReference>
<dbReference type="GO" id="GO:0045901">
    <property type="term" value="P:positive regulation of translational elongation"/>
    <property type="evidence" value="ECO:0000250"/>
    <property type="project" value="UniProtKB"/>
</dbReference>
<dbReference type="GO" id="GO:0051289">
    <property type="term" value="P:protein homotetramerization"/>
    <property type="evidence" value="ECO:0000250"/>
    <property type="project" value="UniProtKB"/>
</dbReference>
<dbReference type="GO" id="GO:0006508">
    <property type="term" value="P:proteolysis"/>
    <property type="evidence" value="ECO:0007669"/>
    <property type="project" value="UniProtKB-KW"/>
</dbReference>
<dbReference type="GO" id="GO:0051726">
    <property type="term" value="P:regulation of cell cycle"/>
    <property type="evidence" value="ECO:0007669"/>
    <property type="project" value="InterPro"/>
</dbReference>
<dbReference type="GO" id="GO:0006357">
    <property type="term" value="P:regulation of transcription by RNA polymerase II"/>
    <property type="evidence" value="ECO:0000250"/>
    <property type="project" value="UniProtKB"/>
</dbReference>
<dbReference type="CDD" id="cd02667">
    <property type="entry name" value="Peptidase_C19K"/>
    <property type="match status" value="1"/>
</dbReference>
<dbReference type="FunFam" id="3.30.40.10:FF:000147">
    <property type="entry name" value="Ubiquitin carboxyl-terminal hydrolase 16"/>
    <property type="match status" value="1"/>
</dbReference>
<dbReference type="FunFam" id="3.90.70.10:FF:000045">
    <property type="entry name" value="Ubiquitin carboxyl-terminal hydrolase 16"/>
    <property type="match status" value="1"/>
</dbReference>
<dbReference type="FunFam" id="3.90.70.10:FF:000175">
    <property type="entry name" value="Ubiquitin carboxyl-terminal hydrolase 16"/>
    <property type="match status" value="1"/>
</dbReference>
<dbReference type="Gene3D" id="3.90.70.10">
    <property type="entry name" value="Cysteine proteinases"/>
    <property type="match status" value="2"/>
</dbReference>
<dbReference type="Gene3D" id="3.30.40.10">
    <property type="entry name" value="Zinc/RING finger domain, C3HC4 (zinc finger)"/>
    <property type="match status" value="1"/>
</dbReference>
<dbReference type="HAMAP" id="MF_03062">
    <property type="entry name" value="UBP16"/>
    <property type="match status" value="1"/>
</dbReference>
<dbReference type="InterPro" id="IPR038765">
    <property type="entry name" value="Papain-like_cys_pep_sf"/>
</dbReference>
<dbReference type="InterPro" id="IPR050164">
    <property type="entry name" value="Peptidase_C19"/>
</dbReference>
<dbReference type="InterPro" id="IPR001394">
    <property type="entry name" value="Peptidase_C19_UCH"/>
</dbReference>
<dbReference type="InterPro" id="IPR030849">
    <property type="entry name" value="UBP16"/>
</dbReference>
<dbReference type="InterPro" id="IPR018200">
    <property type="entry name" value="USP_CS"/>
</dbReference>
<dbReference type="InterPro" id="IPR028889">
    <property type="entry name" value="USP_dom"/>
</dbReference>
<dbReference type="InterPro" id="IPR013083">
    <property type="entry name" value="Znf_RING/FYVE/PHD"/>
</dbReference>
<dbReference type="InterPro" id="IPR001607">
    <property type="entry name" value="Znf_UBP"/>
</dbReference>
<dbReference type="PANTHER" id="PTHR24006">
    <property type="entry name" value="UBIQUITIN CARBOXYL-TERMINAL HYDROLASE"/>
    <property type="match status" value="1"/>
</dbReference>
<dbReference type="PANTHER" id="PTHR24006:SF852">
    <property type="entry name" value="UBIQUITIN CARBOXYL-TERMINAL HYDROLASE"/>
    <property type="match status" value="1"/>
</dbReference>
<dbReference type="Pfam" id="PF00443">
    <property type="entry name" value="UCH"/>
    <property type="match status" value="1"/>
</dbReference>
<dbReference type="Pfam" id="PF02148">
    <property type="entry name" value="zf-UBP"/>
    <property type="match status" value="1"/>
</dbReference>
<dbReference type="SMART" id="SM00290">
    <property type="entry name" value="ZnF_UBP"/>
    <property type="match status" value="1"/>
</dbReference>
<dbReference type="SUPFAM" id="SSF54001">
    <property type="entry name" value="Cysteine proteinases"/>
    <property type="match status" value="1"/>
</dbReference>
<dbReference type="SUPFAM" id="SSF57850">
    <property type="entry name" value="RING/U-box"/>
    <property type="match status" value="1"/>
</dbReference>
<dbReference type="PROSITE" id="PS00972">
    <property type="entry name" value="USP_1"/>
    <property type="match status" value="1"/>
</dbReference>
<dbReference type="PROSITE" id="PS00973">
    <property type="entry name" value="USP_2"/>
    <property type="match status" value="1"/>
</dbReference>
<dbReference type="PROSITE" id="PS50235">
    <property type="entry name" value="USP_3"/>
    <property type="match status" value="1"/>
</dbReference>
<dbReference type="PROSITE" id="PS50271">
    <property type="entry name" value="ZF_UBP"/>
    <property type="match status" value="1"/>
</dbReference>
<comment type="function">
    <text evidence="2">Specifically deubiquitinates 'Lys-120' of histone H2A (H2AK119Ub), a specific tag for epigenetic transcriptional repression, thereby acting as a coactivator. Deubiquitination of histone H2A is a prerequisite for subsequent phosphorylation at 'Ser-11' of histone H3 (H3S10ph), and is required for chromosome segregation when cells enter into mitosis. In resting B- and T-lymphocytes, phosphorylation by AURKB leads to enhance its activity, thereby maintaining transcription in resting lymphocytes. Regulates Hox gene expression via histone H2A deubiquitination. Prefers nucleosomal substrates. Does not deubiquitinate histone H2B. Also deubiquitinates non-histone proteins, such as ribosomal protein RPS27A: deubiquitination of monoubiquitinated RPS27A promotes maturation of the 40S ribosomal subunit. Also mediates deubiquitination of tektin proteins (TEKT1, TEKT2, TEK3, TEKT4 and TEKT5), promoting their stability.</text>
</comment>
<comment type="catalytic activity">
    <reaction evidence="2">
        <text>Thiol-dependent hydrolysis of ester, thioester, amide, peptide and isopeptide bonds formed by the C-terminal Gly of ubiquitin (a 76-residue protein attached to proteins as an intracellular targeting signal).</text>
        <dbReference type="EC" id="3.4.19.12"/>
    </reaction>
</comment>
<comment type="subunit">
    <text evidence="2">Homotetramer. Associates with late pre-40S ribosomes. Interacts with CEP78; promoting deubiquitination of tektins.</text>
</comment>
<comment type="subcellular location">
    <subcellularLocation>
        <location evidence="2">Nucleus</location>
    </subcellularLocation>
</comment>
<comment type="alternative products">
    <event type="alternative splicing"/>
    <isoform>
        <id>Q2KJ09-1</id>
        <name>1</name>
        <sequence type="displayed"/>
    </isoform>
    <isoform>
        <id>Q2KJ09-2</id>
        <name>2</name>
        <sequence type="described" ref="VSP_036725"/>
    </isoform>
</comment>
<comment type="domain">
    <text evidence="2">The UBP-type zinc finger binds 3 zinc ions that form a pair of cross-braced ring fingers encapsulated within a third zinc finger in the primary structure. It recognizes the C-terminal tail of free ubiquitin.</text>
</comment>
<comment type="PTM">
    <text evidence="2">Phosphorylated at the onset of mitosis and dephosphorylated during the metaphase/anaphase transition. Phosphorylation by AURKB enhances the deubiquitinase activity.</text>
</comment>
<comment type="similarity">
    <text evidence="2">Belongs to the peptidase C19 family. USP16 subfamily.</text>
</comment>
<comment type="sequence caution" evidence="6">
    <conflict type="miscellaneous discrepancy">
        <sequence resource="EMBL-CDS" id="AAI12387"/>
    </conflict>
    <text>Contaminating sequence. Potential poly-A sequence.</text>
</comment>
<protein>
    <recommendedName>
        <fullName evidence="2">Ubiquitin carboxyl-terminal hydrolase 16</fullName>
        <ecNumber evidence="2">3.4.19.12</ecNumber>
    </recommendedName>
    <alternativeName>
        <fullName evidence="2">Deubiquitinating enzyme 16</fullName>
    </alternativeName>
    <alternativeName>
        <fullName evidence="2">Ubiquitin thioesterase 16</fullName>
    </alternativeName>
    <alternativeName>
        <fullName evidence="2">Ubiquitin-specific-processing protease 16</fullName>
    </alternativeName>
</protein>
<reference key="1">
    <citation type="submission" date="2005-08" db="EMBL/GenBank/DDBJ databases">
        <authorList>
            <person name="Mural R.J."/>
            <person name="Adams M.D."/>
            <person name="Myers E.W."/>
            <person name="Smith H.O."/>
            <person name="Venter J.C."/>
        </authorList>
    </citation>
    <scope>NUCLEOTIDE SEQUENCE [LARGE SCALE GENOMIC DNA]</scope>
</reference>
<reference key="2">
    <citation type="journal article" date="2004" name="Genome Res.">
        <title>The status, quality, and expansion of the NIH full-length cDNA project: the Mammalian Gene Collection (MGC).</title>
        <authorList>
            <consortium name="The MGC Project Team"/>
        </authorList>
    </citation>
    <scope>NUCLEOTIDE SEQUENCE [LARGE SCALE MRNA] OF 1-659 (ISOFORM 2)</scope>
    <source>
        <tissue>Prostate</tissue>
    </source>
</reference>
<reference key="3">
    <citation type="journal article" date="2012" name="Nat. Commun.">
        <title>Quantitative maps of protein phosphorylation sites across 14 different rat organs and tissues.</title>
        <authorList>
            <person name="Lundby A."/>
            <person name="Secher A."/>
            <person name="Lage K."/>
            <person name="Nordsborg N.B."/>
            <person name="Dmytriyev A."/>
            <person name="Lundby C."/>
            <person name="Olsen J.V."/>
        </authorList>
    </citation>
    <scope>PHOSPHORYLATION [LARGE SCALE ANALYSIS] AT SER-414</scope>
    <scope>IDENTIFICATION BY MASS SPECTROMETRY [LARGE SCALE ANALYSIS]</scope>
</reference>
<accession>Q2KJ09</accession>
<feature type="chain" id="PRO_0000367504" description="Ubiquitin carboxyl-terminal hydrolase 16">
    <location>
        <begin position="1"/>
        <end position="826"/>
    </location>
</feature>
<feature type="domain" description="USP">
    <location>
        <begin position="195"/>
        <end position="825"/>
    </location>
</feature>
<feature type="zinc finger region" description="UBP-type" evidence="3">
    <location>
        <begin position="22"/>
        <end position="141"/>
    </location>
</feature>
<feature type="region of interest" description="Disordered" evidence="4">
    <location>
        <begin position="1"/>
        <end position="23"/>
    </location>
</feature>
<feature type="region of interest" description="Disordered" evidence="4">
    <location>
        <begin position="145"/>
        <end position="184"/>
    </location>
</feature>
<feature type="region of interest" description="Disordered" evidence="4">
    <location>
        <begin position="392"/>
        <end position="456"/>
    </location>
</feature>
<feature type="region of interest" description="Disordered" evidence="4">
    <location>
        <begin position="526"/>
        <end position="553"/>
    </location>
</feature>
<feature type="compositionally biased region" description="Basic and acidic residues" evidence="4">
    <location>
        <begin position="148"/>
        <end position="180"/>
    </location>
</feature>
<feature type="compositionally biased region" description="Basic and acidic residues" evidence="4">
    <location>
        <begin position="392"/>
        <end position="407"/>
    </location>
</feature>
<feature type="compositionally biased region" description="Acidic residues" evidence="4">
    <location>
        <begin position="408"/>
        <end position="419"/>
    </location>
</feature>
<feature type="compositionally biased region" description="Basic residues" evidence="4">
    <location>
        <begin position="436"/>
        <end position="456"/>
    </location>
</feature>
<feature type="compositionally biased region" description="Basic and acidic residues" evidence="4">
    <location>
        <begin position="526"/>
        <end position="537"/>
    </location>
</feature>
<feature type="compositionally biased region" description="Polar residues" evidence="4">
    <location>
        <begin position="539"/>
        <end position="551"/>
    </location>
</feature>
<feature type="active site" description="Nucleophile" evidence="2">
    <location>
        <position position="204"/>
    </location>
</feature>
<feature type="active site" description="Proton acceptor" evidence="2">
    <location>
        <position position="760"/>
    </location>
</feature>
<feature type="binding site" evidence="3">
    <location>
        <position position="24"/>
    </location>
    <ligand>
        <name>Zn(2+)</name>
        <dbReference type="ChEBI" id="CHEBI:29105"/>
        <label>1</label>
    </ligand>
</feature>
<feature type="binding site" evidence="3">
    <location>
        <position position="26"/>
    </location>
    <ligand>
        <name>Zn(2+)</name>
        <dbReference type="ChEBI" id="CHEBI:29105"/>
        <label>1</label>
    </ligand>
</feature>
<feature type="binding site" evidence="3">
    <location>
        <position position="48"/>
    </location>
    <ligand>
        <name>Zn(2+)</name>
        <dbReference type="ChEBI" id="CHEBI:29105"/>
        <label>2</label>
    </ligand>
</feature>
<feature type="binding site" evidence="3">
    <location>
        <position position="51"/>
    </location>
    <ligand>
        <name>Zn(2+)</name>
        <dbReference type="ChEBI" id="CHEBI:29105"/>
        <label>2</label>
    </ligand>
</feature>
<feature type="binding site" evidence="3">
    <location>
        <position position="73"/>
    </location>
    <ligand>
        <name>Zn(2+)</name>
        <dbReference type="ChEBI" id="CHEBI:29105"/>
        <label>3</label>
    </ligand>
</feature>
<feature type="binding site" evidence="3">
    <location>
        <position position="76"/>
    </location>
    <ligand>
        <name>Zn(2+)</name>
        <dbReference type="ChEBI" id="CHEBI:29105"/>
        <label>3</label>
    </ligand>
</feature>
<feature type="binding site" evidence="3">
    <location>
        <position position="81"/>
    </location>
    <ligand>
        <name>Zn(2+)</name>
        <dbReference type="ChEBI" id="CHEBI:29105"/>
        <label>2</label>
    </ligand>
</feature>
<feature type="binding site" evidence="3">
    <location>
        <position position="89"/>
    </location>
    <ligand>
        <name>Zn(2+)</name>
        <dbReference type="ChEBI" id="CHEBI:29105"/>
        <label>2</label>
    </ligand>
</feature>
<feature type="binding site" evidence="3">
    <location>
        <position position="93"/>
    </location>
    <ligand>
        <name>Zn(2+)</name>
        <dbReference type="ChEBI" id="CHEBI:29105"/>
        <label>3</label>
    </ligand>
</feature>
<feature type="binding site" evidence="3">
    <location>
        <position position="102"/>
    </location>
    <ligand>
        <name>Zn(2+)</name>
        <dbReference type="ChEBI" id="CHEBI:29105"/>
        <label>3</label>
    </ligand>
</feature>
<feature type="binding site" evidence="3">
    <location>
        <position position="115"/>
    </location>
    <ligand>
        <name>Zn(2+)</name>
        <dbReference type="ChEBI" id="CHEBI:29105"/>
        <label>1</label>
    </ligand>
</feature>
<feature type="binding site" evidence="3">
    <location>
        <position position="118"/>
    </location>
    <ligand>
        <name>Zn(2+)</name>
        <dbReference type="ChEBI" id="CHEBI:29105"/>
        <label>1</label>
    </ligand>
</feature>
<feature type="modified residue" description="Phosphoserine" evidence="1">
    <location>
        <position position="188"/>
    </location>
</feature>
<feature type="modified residue" description="Phosphoserine" evidence="7">
    <location>
        <position position="414"/>
    </location>
</feature>
<feature type="cross-link" description="Glycyl lysine isopeptide (Lys-Gly) (interchain with G-Cter in SUMO2)" evidence="1">
    <location>
        <position position="139"/>
    </location>
</feature>
<feature type="splice variant" id="VSP_036725" description="In isoform 2." evidence="5">
    <location>
        <position position="149"/>
    </location>
</feature>
<organism>
    <name type="scientific">Rattus norvegicus</name>
    <name type="common">Rat</name>
    <dbReference type="NCBI Taxonomy" id="10116"/>
    <lineage>
        <taxon>Eukaryota</taxon>
        <taxon>Metazoa</taxon>
        <taxon>Chordata</taxon>
        <taxon>Craniata</taxon>
        <taxon>Vertebrata</taxon>
        <taxon>Euteleostomi</taxon>
        <taxon>Mammalia</taxon>
        <taxon>Eutheria</taxon>
        <taxon>Euarchontoglires</taxon>
        <taxon>Glires</taxon>
        <taxon>Rodentia</taxon>
        <taxon>Myomorpha</taxon>
        <taxon>Muroidea</taxon>
        <taxon>Muridae</taxon>
        <taxon>Murinae</taxon>
        <taxon>Rattus</taxon>
    </lineage>
</organism>